<accession>A1WXK3</accession>
<sequence>MLILTRRVGETLMIGDDVSVTVLGVKGNQVRIGVNAPRDVSVHREEIYERIRHEKDGDVPEAAPGQGADPQ</sequence>
<reference key="1">
    <citation type="submission" date="2006-12" db="EMBL/GenBank/DDBJ databases">
        <title>Complete sequence of Halorhodospira halophila SL1.</title>
        <authorList>
            <consortium name="US DOE Joint Genome Institute"/>
            <person name="Copeland A."/>
            <person name="Lucas S."/>
            <person name="Lapidus A."/>
            <person name="Barry K."/>
            <person name="Detter J.C."/>
            <person name="Glavina del Rio T."/>
            <person name="Hammon N."/>
            <person name="Israni S."/>
            <person name="Dalin E."/>
            <person name="Tice H."/>
            <person name="Pitluck S."/>
            <person name="Saunders E."/>
            <person name="Brettin T."/>
            <person name="Bruce D."/>
            <person name="Han C."/>
            <person name="Tapia R."/>
            <person name="Schmutz J."/>
            <person name="Larimer F."/>
            <person name="Land M."/>
            <person name="Hauser L."/>
            <person name="Kyrpides N."/>
            <person name="Mikhailova N."/>
            <person name="Hoff W."/>
            <person name="Richardson P."/>
        </authorList>
    </citation>
    <scope>NUCLEOTIDE SEQUENCE [LARGE SCALE GENOMIC DNA]</scope>
    <source>
        <strain>DSM 244 / SL1</strain>
    </source>
</reference>
<protein>
    <recommendedName>
        <fullName evidence="1">Translational regulator CsrA</fullName>
    </recommendedName>
    <alternativeName>
        <fullName evidence="1">Carbon storage regulator</fullName>
    </alternativeName>
</protein>
<feature type="chain" id="PRO_1000023390" description="Translational regulator CsrA">
    <location>
        <begin position="1"/>
        <end position="71"/>
    </location>
</feature>
<feature type="region of interest" description="Disordered" evidence="2">
    <location>
        <begin position="50"/>
        <end position="71"/>
    </location>
</feature>
<keyword id="KW-0010">Activator</keyword>
<keyword id="KW-0963">Cytoplasm</keyword>
<keyword id="KW-1185">Reference proteome</keyword>
<keyword id="KW-0678">Repressor</keyword>
<keyword id="KW-0694">RNA-binding</keyword>
<keyword id="KW-0810">Translation regulation</keyword>
<evidence type="ECO:0000255" key="1">
    <source>
        <dbReference type="HAMAP-Rule" id="MF_00167"/>
    </source>
</evidence>
<evidence type="ECO:0000256" key="2">
    <source>
        <dbReference type="SAM" id="MobiDB-lite"/>
    </source>
</evidence>
<dbReference type="EMBL" id="CP000544">
    <property type="protein sequence ID" value="ABM62415.1"/>
    <property type="molecule type" value="Genomic_DNA"/>
</dbReference>
<dbReference type="RefSeq" id="WP_011814437.1">
    <property type="nucleotide sequence ID" value="NC_008789.1"/>
</dbReference>
<dbReference type="SMR" id="A1WXK3"/>
<dbReference type="STRING" id="349124.Hhal_1651"/>
<dbReference type="KEGG" id="hha:Hhal_1651"/>
<dbReference type="eggNOG" id="COG1551">
    <property type="taxonomic scope" value="Bacteria"/>
</dbReference>
<dbReference type="HOGENOM" id="CLU_164837_2_1_6"/>
<dbReference type="OrthoDB" id="9809061at2"/>
<dbReference type="Proteomes" id="UP000000647">
    <property type="component" value="Chromosome"/>
</dbReference>
<dbReference type="GO" id="GO:0005829">
    <property type="term" value="C:cytosol"/>
    <property type="evidence" value="ECO:0007669"/>
    <property type="project" value="TreeGrafter"/>
</dbReference>
<dbReference type="GO" id="GO:0048027">
    <property type="term" value="F:mRNA 5'-UTR binding"/>
    <property type="evidence" value="ECO:0007669"/>
    <property type="project" value="UniProtKB-UniRule"/>
</dbReference>
<dbReference type="GO" id="GO:0006402">
    <property type="term" value="P:mRNA catabolic process"/>
    <property type="evidence" value="ECO:0007669"/>
    <property type="project" value="InterPro"/>
</dbReference>
<dbReference type="GO" id="GO:0045947">
    <property type="term" value="P:negative regulation of translational initiation"/>
    <property type="evidence" value="ECO:0007669"/>
    <property type="project" value="UniProtKB-UniRule"/>
</dbReference>
<dbReference type="GO" id="GO:0045948">
    <property type="term" value="P:positive regulation of translational initiation"/>
    <property type="evidence" value="ECO:0007669"/>
    <property type="project" value="UniProtKB-UniRule"/>
</dbReference>
<dbReference type="GO" id="GO:0006109">
    <property type="term" value="P:regulation of carbohydrate metabolic process"/>
    <property type="evidence" value="ECO:0007669"/>
    <property type="project" value="UniProtKB-UniRule"/>
</dbReference>
<dbReference type="FunFam" id="2.60.40.4380:FF:000001">
    <property type="entry name" value="Translational regulator CsrA"/>
    <property type="match status" value="1"/>
</dbReference>
<dbReference type="Gene3D" id="2.60.40.4380">
    <property type="entry name" value="Translational regulator CsrA"/>
    <property type="match status" value="1"/>
</dbReference>
<dbReference type="HAMAP" id="MF_00167">
    <property type="entry name" value="CsrA"/>
    <property type="match status" value="1"/>
</dbReference>
<dbReference type="InterPro" id="IPR003751">
    <property type="entry name" value="CsrA"/>
</dbReference>
<dbReference type="InterPro" id="IPR036107">
    <property type="entry name" value="CsrA_sf"/>
</dbReference>
<dbReference type="NCBIfam" id="TIGR00202">
    <property type="entry name" value="csrA"/>
    <property type="match status" value="1"/>
</dbReference>
<dbReference type="NCBIfam" id="NF002469">
    <property type="entry name" value="PRK01712.1"/>
    <property type="match status" value="1"/>
</dbReference>
<dbReference type="PANTHER" id="PTHR34984">
    <property type="entry name" value="CARBON STORAGE REGULATOR"/>
    <property type="match status" value="1"/>
</dbReference>
<dbReference type="PANTHER" id="PTHR34984:SF1">
    <property type="entry name" value="CARBON STORAGE REGULATOR"/>
    <property type="match status" value="1"/>
</dbReference>
<dbReference type="Pfam" id="PF02599">
    <property type="entry name" value="CsrA"/>
    <property type="match status" value="1"/>
</dbReference>
<dbReference type="SUPFAM" id="SSF117130">
    <property type="entry name" value="CsrA-like"/>
    <property type="match status" value="1"/>
</dbReference>
<name>CSRA_HALHL</name>
<gene>
    <name evidence="1" type="primary">csrA</name>
    <name type="ordered locus">Hhal_1651</name>
</gene>
<organism>
    <name type="scientific">Halorhodospira halophila (strain DSM 244 / SL1)</name>
    <name type="common">Ectothiorhodospira halophila (strain DSM 244 / SL1)</name>
    <dbReference type="NCBI Taxonomy" id="349124"/>
    <lineage>
        <taxon>Bacteria</taxon>
        <taxon>Pseudomonadati</taxon>
        <taxon>Pseudomonadota</taxon>
        <taxon>Gammaproteobacteria</taxon>
        <taxon>Chromatiales</taxon>
        <taxon>Ectothiorhodospiraceae</taxon>
        <taxon>Halorhodospira</taxon>
    </lineage>
</organism>
<proteinExistence type="inferred from homology"/>
<comment type="function">
    <text evidence="1">A key translational regulator that binds mRNA to regulate translation initiation and/or mRNA stability. Mediates global changes in gene expression, shifting from rapid growth to stress survival by linking envelope stress, the stringent response and the catabolite repression systems. Usually binds in the 5'-UTR; binding at or near the Shine-Dalgarno sequence prevents ribosome-binding, repressing translation, binding elsewhere in the 5'-UTR can activate translation and/or stabilize the mRNA. Its function is antagonized by small RNA(s).</text>
</comment>
<comment type="subunit">
    <text evidence="1">Homodimer; the beta-strands of each monomer intercalate to form a hydrophobic core, while the alpha-helices form wings that extend away from the core.</text>
</comment>
<comment type="subcellular location">
    <subcellularLocation>
        <location evidence="1">Cytoplasm</location>
    </subcellularLocation>
</comment>
<comment type="similarity">
    <text evidence="1">Belongs to the CsrA/RsmA family.</text>
</comment>